<evidence type="ECO:0000250" key="1">
    <source>
        <dbReference type="UniProtKB" id="Q9P0S2"/>
    </source>
</evidence>
<evidence type="ECO:0000255" key="2"/>
<evidence type="ECO:0000256" key="3">
    <source>
        <dbReference type="SAM" id="MobiDB-lite"/>
    </source>
</evidence>
<evidence type="ECO:0000305" key="4"/>
<organism>
    <name type="scientific">Bos taurus</name>
    <name type="common">Bovine</name>
    <dbReference type="NCBI Taxonomy" id="9913"/>
    <lineage>
        <taxon>Eukaryota</taxon>
        <taxon>Metazoa</taxon>
        <taxon>Chordata</taxon>
        <taxon>Craniata</taxon>
        <taxon>Vertebrata</taxon>
        <taxon>Euteleostomi</taxon>
        <taxon>Mammalia</taxon>
        <taxon>Eutheria</taxon>
        <taxon>Laurasiatheria</taxon>
        <taxon>Artiodactyla</taxon>
        <taxon>Ruminantia</taxon>
        <taxon>Pecora</taxon>
        <taxon>Bovidae</taxon>
        <taxon>Bovinae</taxon>
        <taxon>Bos</taxon>
    </lineage>
</organism>
<reference key="1">
    <citation type="submission" date="2006-01" db="EMBL/GenBank/DDBJ databases">
        <authorList>
            <consortium name="NIH - Mammalian Gene Collection (MGC) project"/>
        </authorList>
    </citation>
    <scope>NUCLEOTIDE SEQUENCE [LARGE SCALE MRNA]</scope>
    <source>
        <strain>Hereford</strain>
        <tissue>Hypothalamus</tissue>
    </source>
</reference>
<feature type="chain" id="PRO_0000355116" description="Cytochrome c oxidase assembly protein COX16 homolog, mitochondrial">
    <location>
        <begin position="1"/>
        <end position="107"/>
    </location>
</feature>
<feature type="topological domain" description="Mitochondrial matrix" evidence="1">
    <location>
        <begin position="1"/>
        <end position="14"/>
    </location>
</feature>
<feature type="transmembrane region" description="Helical" evidence="2">
    <location>
        <begin position="15"/>
        <end position="37"/>
    </location>
</feature>
<feature type="topological domain" description="Mitochondrial intermembrane" evidence="1">
    <location>
        <begin position="38"/>
        <end position="107"/>
    </location>
</feature>
<feature type="region of interest" description="Disordered" evidence="3">
    <location>
        <begin position="80"/>
        <end position="107"/>
    </location>
</feature>
<comment type="function">
    <text evidence="1">Required for the assembly of the mitochondrial respiratory chain complex IV (CIV), also known as cytochrome c oxidase. Promotes the insertion of copper into the active site of cytochrome c oxidase subunit II (MT-CO2/COX2). Interacts specifically with newly synthesized MT-CO2/COX and its copper center-forming metallochaperones SCO1, SCO2 and COA6. Probably facilitates MT-CO2/COX2 association with the MITRAC assembly intermediate containing MT-CO1/COX1, thereby participating in merging the MT-CO1/COX1 and MT-CO2/COX2 assembly lines.</text>
</comment>
<comment type="subunit">
    <text evidence="1">Associates with the MITRAC complex. Interacts with MT-CO2/COX; specifically interacts with newly synthesized MT-CO2/COX. Interacts with SCO1, SCO2 and COA6.</text>
</comment>
<comment type="subcellular location">
    <subcellularLocation>
        <location evidence="1">Mitochondrion inner membrane</location>
        <topology evidence="1">Single-pass membrane protein</topology>
    </subcellularLocation>
</comment>
<comment type="similarity">
    <text evidence="4">Belongs to the COX16 family.</text>
</comment>
<accession>Q2NKS2</accession>
<proteinExistence type="inferred from homology"/>
<sequence length="107" mass="12518">MFGYAVRRALRKSKTLRYGVPMLLLIVGGSFGLREFSQIRYDAVKIKIDPELEKKLKMNKVSLESEYEKIKDSTFDDWKNIRGPRPWEDPDLLQGRNPEILKTNKTT</sequence>
<gene>
    <name evidence="1" type="primary">COX16</name>
</gene>
<keyword id="KW-0472">Membrane</keyword>
<keyword id="KW-0496">Mitochondrion</keyword>
<keyword id="KW-0999">Mitochondrion inner membrane</keyword>
<keyword id="KW-1185">Reference proteome</keyword>
<keyword id="KW-0812">Transmembrane</keyword>
<keyword id="KW-1133">Transmembrane helix</keyword>
<protein>
    <recommendedName>
        <fullName evidence="4">Cytochrome c oxidase assembly protein COX16 homolog, mitochondrial</fullName>
    </recommendedName>
</protein>
<dbReference type="EMBL" id="BC111674">
    <property type="protein sequence ID" value="AAI11675.1"/>
    <property type="molecule type" value="mRNA"/>
</dbReference>
<dbReference type="RefSeq" id="NP_001040033.1">
    <property type="nucleotide sequence ID" value="NM_001046568.1"/>
</dbReference>
<dbReference type="FunCoup" id="Q2NKS2">
    <property type="interactions" value="715"/>
</dbReference>
<dbReference type="STRING" id="9913.ENSBTAP00000020832"/>
<dbReference type="PaxDb" id="9913-ENSBTAP00000020832"/>
<dbReference type="Ensembl" id="ENSBTAT00000020832.4">
    <property type="protein sequence ID" value="ENSBTAP00000020832.3"/>
    <property type="gene ID" value="ENSBTAG00000030595.3"/>
</dbReference>
<dbReference type="GeneID" id="615979"/>
<dbReference type="KEGG" id="bta:615979"/>
<dbReference type="CTD" id="51241"/>
<dbReference type="VEuPathDB" id="HostDB:ENSBTAG00000030595"/>
<dbReference type="VGNC" id="VGNC:27630">
    <property type="gene designation" value="COX16"/>
</dbReference>
<dbReference type="eggNOG" id="ENOG502S3RD">
    <property type="taxonomic scope" value="Eukaryota"/>
</dbReference>
<dbReference type="GeneTree" id="ENSGT00520000055955"/>
<dbReference type="HOGENOM" id="CLU_163592_0_0_1"/>
<dbReference type="InParanoid" id="Q2NKS2"/>
<dbReference type="OMA" id="FKYGVPF"/>
<dbReference type="OrthoDB" id="5516033at2759"/>
<dbReference type="TreeFam" id="TF324420"/>
<dbReference type="Reactome" id="R-BTA-9864848">
    <property type="pathway name" value="Complex IV assembly"/>
</dbReference>
<dbReference type="Proteomes" id="UP000009136">
    <property type="component" value="Chromosome 10"/>
</dbReference>
<dbReference type="Bgee" id="ENSBTAG00000030595">
    <property type="expression patterns" value="Expressed in oocyte and 106 other cell types or tissues"/>
</dbReference>
<dbReference type="GO" id="GO:0005743">
    <property type="term" value="C:mitochondrial inner membrane"/>
    <property type="evidence" value="ECO:0000250"/>
    <property type="project" value="UniProtKB"/>
</dbReference>
<dbReference type="GO" id="GO:0033617">
    <property type="term" value="P:mitochondrial cytochrome c oxidase assembly"/>
    <property type="evidence" value="ECO:0000250"/>
    <property type="project" value="UniProtKB"/>
</dbReference>
<dbReference type="InterPro" id="IPR020164">
    <property type="entry name" value="Cyt_c_Oxase_assmbl_COX16"/>
</dbReference>
<dbReference type="PANTHER" id="PTHR17130:SF14">
    <property type="entry name" value="CYTOCHROME C OXIDASE ASSEMBLY PROTEIN COX16 HOMOLOG, MITOCHONDRIAL"/>
    <property type="match status" value="1"/>
</dbReference>
<dbReference type="PANTHER" id="PTHR17130">
    <property type="entry name" value="MITOCHONDRIAL OUTER MEMBRANE PROTEIN 25"/>
    <property type="match status" value="1"/>
</dbReference>
<dbReference type="Pfam" id="PF14138">
    <property type="entry name" value="COX16"/>
    <property type="match status" value="1"/>
</dbReference>
<name>COX16_BOVIN</name>